<feature type="chain" id="PRO_1000071814" description="Sec-independent protein translocase protein TatA">
    <location>
        <begin position="1"/>
        <end position="75"/>
    </location>
</feature>
<feature type="transmembrane region" description="Helical" evidence="1">
    <location>
        <begin position="1"/>
        <end position="21"/>
    </location>
</feature>
<feature type="region of interest" description="Disordered" evidence="2">
    <location>
        <begin position="41"/>
        <end position="75"/>
    </location>
</feature>
<feature type="compositionally biased region" description="Low complexity" evidence="2">
    <location>
        <begin position="56"/>
        <end position="65"/>
    </location>
</feature>
<feature type="compositionally biased region" description="Basic and acidic residues" evidence="2">
    <location>
        <begin position="66"/>
        <end position="75"/>
    </location>
</feature>
<dbReference type="EMBL" id="CP000514">
    <property type="protein sequence ID" value="ABM20491.1"/>
    <property type="molecule type" value="Genomic_DNA"/>
</dbReference>
<dbReference type="RefSeq" id="WP_011786832.1">
    <property type="nucleotide sequence ID" value="NC_008740.1"/>
</dbReference>
<dbReference type="SMR" id="A1U672"/>
<dbReference type="STRING" id="351348.Maqu_3420"/>
<dbReference type="KEGG" id="maq:Maqu_3420"/>
<dbReference type="eggNOG" id="COG1826">
    <property type="taxonomic scope" value="Bacteria"/>
</dbReference>
<dbReference type="HOGENOM" id="CLU_086034_5_3_6"/>
<dbReference type="OrthoDB" id="7066617at2"/>
<dbReference type="Proteomes" id="UP000000998">
    <property type="component" value="Chromosome"/>
</dbReference>
<dbReference type="GO" id="GO:0033281">
    <property type="term" value="C:TAT protein transport complex"/>
    <property type="evidence" value="ECO:0007669"/>
    <property type="project" value="UniProtKB-UniRule"/>
</dbReference>
<dbReference type="GO" id="GO:0008320">
    <property type="term" value="F:protein transmembrane transporter activity"/>
    <property type="evidence" value="ECO:0007669"/>
    <property type="project" value="UniProtKB-UniRule"/>
</dbReference>
<dbReference type="GO" id="GO:0043953">
    <property type="term" value="P:protein transport by the Tat complex"/>
    <property type="evidence" value="ECO:0007669"/>
    <property type="project" value="UniProtKB-UniRule"/>
</dbReference>
<dbReference type="Gene3D" id="1.20.5.3310">
    <property type="match status" value="1"/>
</dbReference>
<dbReference type="HAMAP" id="MF_00236">
    <property type="entry name" value="TatA_E"/>
    <property type="match status" value="1"/>
</dbReference>
<dbReference type="InterPro" id="IPR003369">
    <property type="entry name" value="TatA/B/E"/>
</dbReference>
<dbReference type="InterPro" id="IPR006312">
    <property type="entry name" value="TatA/E"/>
</dbReference>
<dbReference type="NCBIfam" id="NF002813">
    <property type="entry name" value="PRK02958.1"/>
    <property type="match status" value="1"/>
</dbReference>
<dbReference type="NCBIfam" id="TIGR01411">
    <property type="entry name" value="tatAE"/>
    <property type="match status" value="1"/>
</dbReference>
<dbReference type="PANTHER" id="PTHR42982">
    <property type="entry name" value="SEC-INDEPENDENT PROTEIN TRANSLOCASE PROTEIN TATA"/>
    <property type="match status" value="1"/>
</dbReference>
<dbReference type="PANTHER" id="PTHR42982:SF1">
    <property type="entry name" value="SEC-INDEPENDENT PROTEIN TRANSLOCASE PROTEIN TATA"/>
    <property type="match status" value="1"/>
</dbReference>
<dbReference type="Pfam" id="PF02416">
    <property type="entry name" value="TatA_B_E"/>
    <property type="match status" value="1"/>
</dbReference>
<keyword id="KW-0997">Cell inner membrane</keyword>
<keyword id="KW-1003">Cell membrane</keyword>
<keyword id="KW-0472">Membrane</keyword>
<keyword id="KW-0653">Protein transport</keyword>
<keyword id="KW-0811">Translocation</keyword>
<keyword id="KW-0812">Transmembrane</keyword>
<keyword id="KW-1133">Transmembrane helix</keyword>
<keyword id="KW-0813">Transport</keyword>
<evidence type="ECO:0000255" key="1">
    <source>
        <dbReference type="HAMAP-Rule" id="MF_00236"/>
    </source>
</evidence>
<evidence type="ECO:0000256" key="2">
    <source>
        <dbReference type="SAM" id="MobiDB-lite"/>
    </source>
</evidence>
<comment type="function">
    <text evidence="1">Part of the twin-arginine translocation (Tat) system that transports large folded proteins containing a characteristic twin-arginine motif in their signal peptide across membranes. TatA could form the protein-conducting channel of the Tat system.</text>
</comment>
<comment type="subunit">
    <text evidence="1">The Tat system comprises two distinct complexes: a TatABC complex, containing multiple copies of TatA, TatB and TatC subunits, and a separate TatA complex, containing only TatA subunits. Substrates initially bind to the TatABC complex, which probably triggers association of the separate TatA complex to form the active translocon.</text>
</comment>
<comment type="subcellular location">
    <subcellularLocation>
        <location evidence="1">Cell inner membrane</location>
        <topology evidence="1">Single-pass membrane protein</topology>
    </subcellularLocation>
</comment>
<comment type="similarity">
    <text evidence="1">Belongs to the TatA/E family.</text>
</comment>
<accession>A1U672</accession>
<reference key="1">
    <citation type="journal article" date="2011" name="Appl. Environ. Microbiol.">
        <title>Genomic potential of Marinobacter aquaeolei, a biogeochemical 'opportunitroph'.</title>
        <authorList>
            <person name="Singer E."/>
            <person name="Webb E.A."/>
            <person name="Nelson W.C."/>
            <person name="Heidelberg J.F."/>
            <person name="Ivanova N."/>
            <person name="Pati A."/>
            <person name="Edwards K.J."/>
        </authorList>
    </citation>
    <scope>NUCLEOTIDE SEQUENCE [LARGE SCALE GENOMIC DNA]</scope>
    <source>
        <strain>ATCC 700491 / DSM 11845 / VT8</strain>
    </source>
</reference>
<gene>
    <name evidence="1" type="primary">tatA</name>
    <name type="ordered locus">Maqu_3420</name>
</gene>
<organism>
    <name type="scientific">Marinobacter nauticus (strain ATCC 700491 / DSM 11845 / VT8)</name>
    <name type="common">Marinobacter aquaeolei</name>
    <dbReference type="NCBI Taxonomy" id="351348"/>
    <lineage>
        <taxon>Bacteria</taxon>
        <taxon>Pseudomonadati</taxon>
        <taxon>Pseudomonadota</taxon>
        <taxon>Gammaproteobacteria</taxon>
        <taxon>Pseudomonadales</taxon>
        <taxon>Marinobacteraceae</taxon>
        <taxon>Marinobacter</taxon>
    </lineage>
</organism>
<name>TATA_MARN8</name>
<protein>
    <recommendedName>
        <fullName evidence="1">Sec-independent protein translocase protein TatA</fullName>
    </recommendedName>
</protein>
<proteinExistence type="inferred from homology"/>
<sequence>MGISIWQLLIVLGIVILLFGTKKLRNIGSDLGGAIRGFKKSMSDEEEKNAEQQPLEKQNAEQQAQAEDKPKEKQG</sequence>